<gene>
    <name evidence="1" type="primary">rplF</name>
    <name type="ordered locus">OEOE_0609</name>
</gene>
<protein>
    <recommendedName>
        <fullName evidence="1">Large ribosomal subunit protein uL6</fullName>
    </recommendedName>
    <alternativeName>
        <fullName evidence="2">50S ribosomal protein L6</fullName>
    </alternativeName>
</protein>
<dbReference type="EMBL" id="CP000411">
    <property type="protein sequence ID" value="ABJ56551.1"/>
    <property type="molecule type" value="Genomic_DNA"/>
</dbReference>
<dbReference type="RefSeq" id="WP_002816351.1">
    <property type="nucleotide sequence ID" value="NC_008528.1"/>
</dbReference>
<dbReference type="SMR" id="Q04G71"/>
<dbReference type="STRING" id="203123.OEOE_0609"/>
<dbReference type="GeneID" id="75065431"/>
<dbReference type="KEGG" id="ooe:OEOE_0609"/>
<dbReference type="eggNOG" id="COG0097">
    <property type="taxonomic scope" value="Bacteria"/>
</dbReference>
<dbReference type="HOGENOM" id="CLU_065464_1_2_9"/>
<dbReference type="Proteomes" id="UP000000774">
    <property type="component" value="Chromosome"/>
</dbReference>
<dbReference type="GO" id="GO:0022625">
    <property type="term" value="C:cytosolic large ribosomal subunit"/>
    <property type="evidence" value="ECO:0007669"/>
    <property type="project" value="TreeGrafter"/>
</dbReference>
<dbReference type="GO" id="GO:0019843">
    <property type="term" value="F:rRNA binding"/>
    <property type="evidence" value="ECO:0007669"/>
    <property type="project" value="UniProtKB-UniRule"/>
</dbReference>
<dbReference type="GO" id="GO:0003735">
    <property type="term" value="F:structural constituent of ribosome"/>
    <property type="evidence" value="ECO:0007669"/>
    <property type="project" value="InterPro"/>
</dbReference>
<dbReference type="GO" id="GO:0002181">
    <property type="term" value="P:cytoplasmic translation"/>
    <property type="evidence" value="ECO:0007669"/>
    <property type="project" value="TreeGrafter"/>
</dbReference>
<dbReference type="FunFam" id="3.90.930.12:FF:000001">
    <property type="entry name" value="50S ribosomal protein L6"/>
    <property type="match status" value="1"/>
</dbReference>
<dbReference type="FunFam" id="3.90.930.12:FF:000002">
    <property type="entry name" value="50S ribosomal protein L6"/>
    <property type="match status" value="1"/>
</dbReference>
<dbReference type="Gene3D" id="3.90.930.12">
    <property type="entry name" value="Ribosomal protein L6, alpha-beta domain"/>
    <property type="match status" value="2"/>
</dbReference>
<dbReference type="HAMAP" id="MF_01365_B">
    <property type="entry name" value="Ribosomal_uL6_B"/>
    <property type="match status" value="1"/>
</dbReference>
<dbReference type="InterPro" id="IPR000702">
    <property type="entry name" value="Ribosomal_uL6-like"/>
</dbReference>
<dbReference type="InterPro" id="IPR036789">
    <property type="entry name" value="Ribosomal_uL6-like_a/b-dom_sf"/>
</dbReference>
<dbReference type="InterPro" id="IPR020040">
    <property type="entry name" value="Ribosomal_uL6_a/b-dom"/>
</dbReference>
<dbReference type="InterPro" id="IPR019906">
    <property type="entry name" value="Ribosomal_uL6_bac-type"/>
</dbReference>
<dbReference type="InterPro" id="IPR002358">
    <property type="entry name" value="Ribosomal_uL6_CS"/>
</dbReference>
<dbReference type="NCBIfam" id="TIGR03654">
    <property type="entry name" value="L6_bact"/>
    <property type="match status" value="1"/>
</dbReference>
<dbReference type="PANTHER" id="PTHR11655">
    <property type="entry name" value="60S/50S RIBOSOMAL PROTEIN L6/L9"/>
    <property type="match status" value="1"/>
</dbReference>
<dbReference type="PANTHER" id="PTHR11655:SF14">
    <property type="entry name" value="LARGE RIBOSOMAL SUBUNIT PROTEIN UL6M"/>
    <property type="match status" value="1"/>
</dbReference>
<dbReference type="Pfam" id="PF00347">
    <property type="entry name" value="Ribosomal_L6"/>
    <property type="match status" value="2"/>
</dbReference>
<dbReference type="PIRSF" id="PIRSF002162">
    <property type="entry name" value="Ribosomal_L6"/>
    <property type="match status" value="1"/>
</dbReference>
<dbReference type="PRINTS" id="PR00059">
    <property type="entry name" value="RIBOSOMALL6"/>
</dbReference>
<dbReference type="SUPFAM" id="SSF56053">
    <property type="entry name" value="Ribosomal protein L6"/>
    <property type="match status" value="2"/>
</dbReference>
<dbReference type="PROSITE" id="PS00525">
    <property type="entry name" value="RIBOSOMAL_L6_1"/>
    <property type="match status" value="1"/>
</dbReference>
<accession>Q04G71</accession>
<evidence type="ECO:0000255" key="1">
    <source>
        <dbReference type="HAMAP-Rule" id="MF_01365"/>
    </source>
</evidence>
<evidence type="ECO:0000305" key="2"/>
<feature type="chain" id="PRO_1000055277" description="Large ribosomal subunit protein uL6">
    <location>
        <begin position="1"/>
        <end position="178"/>
    </location>
</feature>
<reference key="1">
    <citation type="journal article" date="2006" name="Proc. Natl. Acad. Sci. U.S.A.">
        <title>Comparative genomics of the lactic acid bacteria.</title>
        <authorList>
            <person name="Makarova K.S."/>
            <person name="Slesarev A."/>
            <person name="Wolf Y.I."/>
            <person name="Sorokin A."/>
            <person name="Mirkin B."/>
            <person name="Koonin E.V."/>
            <person name="Pavlov A."/>
            <person name="Pavlova N."/>
            <person name="Karamychev V."/>
            <person name="Polouchine N."/>
            <person name="Shakhova V."/>
            <person name="Grigoriev I."/>
            <person name="Lou Y."/>
            <person name="Rohksar D."/>
            <person name="Lucas S."/>
            <person name="Huang K."/>
            <person name="Goodstein D.M."/>
            <person name="Hawkins T."/>
            <person name="Plengvidhya V."/>
            <person name="Welker D."/>
            <person name="Hughes J."/>
            <person name="Goh Y."/>
            <person name="Benson A."/>
            <person name="Baldwin K."/>
            <person name="Lee J.-H."/>
            <person name="Diaz-Muniz I."/>
            <person name="Dosti B."/>
            <person name="Smeianov V."/>
            <person name="Wechter W."/>
            <person name="Barabote R."/>
            <person name="Lorca G."/>
            <person name="Altermann E."/>
            <person name="Barrangou R."/>
            <person name="Ganesan B."/>
            <person name="Xie Y."/>
            <person name="Rawsthorne H."/>
            <person name="Tamir D."/>
            <person name="Parker C."/>
            <person name="Breidt F."/>
            <person name="Broadbent J.R."/>
            <person name="Hutkins R."/>
            <person name="O'Sullivan D."/>
            <person name="Steele J."/>
            <person name="Unlu G."/>
            <person name="Saier M.H. Jr."/>
            <person name="Klaenhammer T."/>
            <person name="Richardson P."/>
            <person name="Kozyavkin S."/>
            <person name="Weimer B.C."/>
            <person name="Mills D.A."/>
        </authorList>
    </citation>
    <scope>NUCLEOTIDE SEQUENCE [LARGE SCALE GENOMIC DNA]</scope>
    <source>
        <strain>ATCC BAA-331 / PSU-1</strain>
    </source>
</reference>
<comment type="function">
    <text evidence="1">This protein binds to the 23S rRNA, and is important in its secondary structure. It is located near the subunit interface in the base of the L7/L12 stalk, and near the tRNA binding site of the peptidyltransferase center.</text>
</comment>
<comment type="subunit">
    <text evidence="1">Part of the 50S ribosomal subunit.</text>
</comment>
<comment type="similarity">
    <text evidence="1">Belongs to the universal ribosomal protein uL6 family.</text>
</comment>
<keyword id="KW-1185">Reference proteome</keyword>
<keyword id="KW-0687">Ribonucleoprotein</keyword>
<keyword id="KW-0689">Ribosomal protein</keyword>
<keyword id="KW-0694">RNA-binding</keyword>
<keyword id="KW-0699">rRNA-binding</keyword>
<organism>
    <name type="scientific">Oenococcus oeni (strain ATCC BAA-331 / PSU-1)</name>
    <dbReference type="NCBI Taxonomy" id="203123"/>
    <lineage>
        <taxon>Bacteria</taxon>
        <taxon>Bacillati</taxon>
        <taxon>Bacillota</taxon>
        <taxon>Bacilli</taxon>
        <taxon>Lactobacillales</taxon>
        <taxon>Lactobacillaceae</taxon>
        <taxon>Oenococcus</taxon>
    </lineage>
</organism>
<proteinExistence type="inferred from homology"/>
<sequence length="178" mass="19258">MSRIGNKAITIPTGVEIKQEGDQVTVKGPKGEITRSIASVISMNIEGSEAKFSRPDDSNRNKALHGTTRANVANMIEGVSKGFKKNLELVGVGYRASMQGDKLVLTVGFSHPVEFEAREGLKVAVPDATHISIEGISKQRVGDFAAEIRGVRPPEPYKGKGIRYQGEIVRRKEGKTGK</sequence>
<name>RL6_OENOB</name>